<evidence type="ECO:0000255" key="1">
    <source>
        <dbReference type="HAMAP-Rule" id="MF_01357"/>
    </source>
</evidence>
<feature type="chain" id="PRO_0000358301" description="NAD(P)H-quinone oxidoreductase subunit J, chloroplastic">
    <location>
        <begin position="1"/>
        <end position="159"/>
    </location>
</feature>
<protein>
    <recommendedName>
        <fullName evidence="1">NAD(P)H-quinone oxidoreductase subunit J, chloroplastic</fullName>
        <ecNumber evidence="1">7.1.1.-</ecNumber>
    </recommendedName>
    <alternativeName>
        <fullName>NAD(P)H dehydrogenase subunit J</fullName>
    </alternativeName>
    <alternativeName>
        <fullName evidence="1">NADH-plastoquinone oxidoreductase subunit J</fullName>
    </alternativeName>
</protein>
<sequence length="159" mass="18659">MRGPLSAWLVKHGLVHRSLGFDYQGIETLQIKPEDWHSIAVILYVYGYNYLRSQCAYDVAPGGLLASIYHLTRIEYGILDQPEEVCIKVFAPRKNPRIPSVFWVWKSADFQERESYDMLGISYDNHPRLKRILMPESWIGWPLRKDYIAPNFYEIQDAH</sequence>
<reference key="1">
    <citation type="journal article" date="2006" name="Science">
        <title>The genome of black cottonwood, Populus trichocarpa (Torr. &amp; Gray).</title>
        <authorList>
            <person name="Tuskan G.A."/>
            <person name="Difazio S."/>
            <person name="Jansson S."/>
            <person name="Bohlmann J."/>
            <person name="Grigoriev I."/>
            <person name="Hellsten U."/>
            <person name="Putnam N."/>
            <person name="Ralph S."/>
            <person name="Rombauts S."/>
            <person name="Salamov A."/>
            <person name="Schein J."/>
            <person name="Sterck L."/>
            <person name="Aerts A."/>
            <person name="Bhalerao R.R."/>
            <person name="Bhalerao R.P."/>
            <person name="Blaudez D."/>
            <person name="Boerjan W."/>
            <person name="Brun A."/>
            <person name="Brunner A."/>
            <person name="Busov V."/>
            <person name="Campbell M."/>
            <person name="Carlson J."/>
            <person name="Chalot M."/>
            <person name="Chapman J."/>
            <person name="Chen G.-L."/>
            <person name="Cooper D."/>
            <person name="Coutinho P.M."/>
            <person name="Couturier J."/>
            <person name="Covert S."/>
            <person name="Cronk Q."/>
            <person name="Cunningham R."/>
            <person name="Davis J."/>
            <person name="Degroeve S."/>
            <person name="Dejardin A."/>
            <person name="dePamphilis C.W."/>
            <person name="Detter J."/>
            <person name="Dirks B."/>
            <person name="Dubchak I."/>
            <person name="Duplessis S."/>
            <person name="Ehlting J."/>
            <person name="Ellis B."/>
            <person name="Gendler K."/>
            <person name="Goodstein D."/>
            <person name="Gribskov M."/>
            <person name="Grimwood J."/>
            <person name="Groover A."/>
            <person name="Gunter L."/>
            <person name="Hamberger B."/>
            <person name="Heinze B."/>
            <person name="Helariutta Y."/>
            <person name="Henrissat B."/>
            <person name="Holligan D."/>
            <person name="Holt R."/>
            <person name="Huang W."/>
            <person name="Islam-Faridi N."/>
            <person name="Jones S."/>
            <person name="Jones-Rhoades M."/>
            <person name="Jorgensen R."/>
            <person name="Joshi C."/>
            <person name="Kangasjaervi J."/>
            <person name="Karlsson J."/>
            <person name="Kelleher C."/>
            <person name="Kirkpatrick R."/>
            <person name="Kirst M."/>
            <person name="Kohler A."/>
            <person name="Kalluri U."/>
            <person name="Larimer F."/>
            <person name="Leebens-Mack J."/>
            <person name="Leple J.-C."/>
            <person name="Locascio P."/>
            <person name="Lou Y."/>
            <person name="Lucas S."/>
            <person name="Martin F."/>
            <person name="Montanini B."/>
            <person name="Napoli C."/>
            <person name="Nelson D.R."/>
            <person name="Nelson C."/>
            <person name="Nieminen K."/>
            <person name="Nilsson O."/>
            <person name="Pereda V."/>
            <person name="Peter G."/>
            <person name="Philippe R."/>
            <person name="Pilate G."/>
            <person name="Poliakov A."/>
            <person name="Razumovskaya J."/>
            <person name="Richardson P."/>
            <person name="Rinaldi C."/>
            <person name="Ritland K."/>
            <person name="Rouze P."/>
            <person name="Ryaboy D."/>
            <person name="Schmutz J."/>
            <person name="Schrader J."/>
            <person name="Segerman B."/>
            <person name="Shin H."/>
            <person name="Siddiqui A."/>
            <person name="Sterky F."/>
            <person name="Terry A."/>
            <person name="Tsai C.-J."/>
            <person name="Uberbacher E."/>
            <person name="Unneberg P."/>
            <person name="Vahala J."/>
            <person name="Wall K."/>
            <person name="Wessler S."/>
            <person name="Yang G."/>
            <person name="Yin T."/>
            <person name="Douglas C."/>
            <person name="Marra M."/>
            <person name="Sandberg G."/>
            <person name="Van de Peer Y."/>
            <person name="Rokhsar D.S."/>
        </authorList>
    </citation>
    <scope>NUCLEOTIDE SEQUENCE [LARGE SCALE GENOMIC DNA]</scope>
    <source>
        <strain>cv. Nisqually</strain>
    </source>
</reference>
<organism>
    <name type="scientific">Populus trichocarpa</name>
    <name type="common">Western balsam poplar</name>
    <name type="synonym">Populus balsamifera subsp. trichocarpa</name>
    <dbReference type="NCBI Taxonomy" id="3694"/>
    <lineage>
        <taxon>Eukaryota</taxon>
        <taxon>Viridiplantae</taxon>
        <taxon>Streptophyta</taxon>
        <taxon>Embryophyta</taxon>
        <taxon>Tracheophyta</taxon>
        <taxon>Spermatophyta</taxon>
        <taxon>Magnoliopsida</taxon>
        <taxon>eudicotyledons</taxon>
        <taxon>Gunneridae</taxon>
        <taxon>Pentapetalae</taxon>
        <taxon>rosids</taxon>
        <taxon>fabids</taxon>
        <taxon>Malpighiales</taxon>
        <taxon>Salicaceae</taxon>
        <taxon>Saliceae</taxon>
        <taxon>Populus</taxon>
    </lineage>
</organism>
<name>NDHJ_POPTR</name>
<gene>
    <name evidence="1" type="primary">ndhJ</name>
    <name type="ordered locus">Poptr_cp025</name>
</gene>
<accession>A4GYR3</accession>
<proteinExistence type="inferred from homology"/>
<geneLocation type="chloroplast"/>
<dbReference type="EC" id="7.1.1.-" evidence="1"/>
<dbReference type="EMBL" id="EF489041">
    <property type="protein sequence ID" value="ABO36707.1"/>
    <property type="molecule type" value="Genomic_DNA"/>
</dbReference>
<dbReference type="RefSeq" id="YP_001109504.1">
    <property type="nucleotide sequence ID" value="NC_009143.1"/>
</dbReference>
<dbReference type="SMR" id="A4GYR3"/>
<dbReference type="FunCoup" id="A4GYR3">
    <property type="interactions" value="36"/>
</dbReference>
<dbReference type="STRING" id="3694.A4GYR3"/>
<dbReference type="EnsemblPlants" id="Potri.013G163200.1.v4.1">
    <property type="protein sequence ID" value="Potri.013G163200.1.v4.1"/>
    <property type="gene ID" value="Potri.013G163200.v4.1"/>
</dbReference>
<dbReference type="GeneID" id="4929670"/>
<dbReference type="Gramene" id="Potri.013G163200.1.v4.1">
    <property type="protein sequence ID" value="Potri.013G163200.1.v4.1"/>
    <property type="gene ID" value="Potri.013G163200.v4.1"/>
</dbReference>
<dbReference type="KEGG" id="pop:4929670"/>
<dbReference type="InParanoid" id="A4GYR3"/>
<dbReference type="OMA" id="NYLQCQG"/>
<dbReference type="OrthoDB" id="1909959at2759"/>
<dbReference type="Proteomes" id="UP000006729">
    <property type="component" value="Chloroplast"/>
</dbReference>
<dbReference type="GO" id="GO:0009535">
    <property type="term" value="C:chloroplast thylakoid membrane"/>
    <property type="evidence" value="ECO:0007669"/>
    <property type="project" value="UniProtKB-SubCell"/>
</dbReference>
<dbReference type="GO" id="GO:0008137">
    <property type="term" value="F:NADH dehydrogenase (ubiquinone) activity"/>
    <property type="evidence" value="ECO:0007669"/>
    <property type="project" value="InterPro"/>
</dbReference>
<dbReference type="GO" id="GO:0048038">
    <property type="term" value="F:quinone binding"/>
    <property type="evidence" value="ECO:0007669"/>
    <property type="project" value="UniProtKB-KW"/>
</dbReference>
<dbReference type="GO" id="GO:0019684">
    <property type="term" value="P:photosynthesis, light reaction"/>
    <property type="evidence" value="ECO:0007669"/>
    <property type="project" value="UniProtKB-UniRule"/>
</dbReference>
<dbReference type="FunFam" id="3.30.460.80:FF:000004">
    <property type="entry name" value="NAD(P)H-quinone oxidoreductase subunit J, chloroplastic"/>
    <property type="match status" value="1"/>
</dbReference>
<dbReference type="Gene3D" id="3.30.460.80">
    <property type="entry name" value="NADH:ubiquinone oxidoreductase, 30kDa subunit"/>
    <property type="match status" value="1"/>
</dbReference>
<dbReference type="HAMAP" id="MF_01357">
    <property type="entry name" value="NDH1_NuoC"/>
    <property type="match status" value="1"/>
</dbReference>
<dbReference type="InterPro" id="IPR010218">
    <property type="entry name" value="NADH_DH_suC"/>
</dbReference>
<dbReference type="InterPro" id="IPR037232">
    <property type="entry name" value="NADH_quin_OxRdtase_su_C/D-like"/>
</dbReference>
<dbReference type="InterPro" id="IPR001268">
    <property type="entry name" value="NADH_UbQ_OxRdtase_30kDa_su"/>
</dbReference>
<dbReference type="InterPro" id="IPR020396">
    <property type="entry name" value="NADH_UbQ_OxRdtase_CS"/>
</dbReference>
<dbReference type="NCBIfam" id="NF009141">
    <property type="entry name" value="PRK12494.1"/>
    <property type="match status" value="1"/>
</dbReference>
<dbReference type="PANTHER" id="PTHR10884:SF14">
    <property type="entry name" value="NADH DEHYDROGENASE [UBIQUINONE] IRON-SULFUR PROTEIN 3, MITOCHONDRIAL"/>
    <property type="match status" value="1"/>
</dbReference>
<dbReference type="PANTHER" id="PTHR10884">
    <property type="entry name" value="NADH DEHYDROGENASE UBIQUINONE IRON-SULFUR PROTEIN 3"/>
    <property type="match status" value="1"/>
</dbReference>
<dbReference type="Pfam" id="PF00329">
    <property type="entry name" value="Complex1_30kDa"/>
    <property type="match status" value="1"/>
</dbReference>
<dbReference type="SUPFAM" id="SSF143243">
    <property type="entry name" value="Nqo5-like"/>
    <property type="match status" value="1"/>
</dbReference>
<dbReference type="PROSITE" id="PS00542">
    <property type="entry name" value="COMPLEX1_30K"/>
    <property type="match status" value="1"/>
</dbReference>
<comment type="function">
    <text evidence="1">NDH shuttles electrons from NAD(P)H:plastoquinone, via FMN and iron-sulfur (Fe-S) centers, to quinones in the photosynthetic chain and possibly in a chloroplast respiratory chain. The immediate electron acceptor for the enzyme in this species is believed to be plastoquinone. Couples the redox reaction to proton translocation, and thus conserves the redox energy in a proton gradient.</text>
</comment>
<comment type="catalytic activity">
    <reaction evidence="1">
        <text>a plastoquinone + NADH + (n+1) H(+)(in) = a plastoquinol + NAD(+) + n H(+)(out)</text>
        <dbReference type="Rhea" id="RHEA:42608"/>
        <dbReference type="Rhea" id="RHEA-COMP:9561"/>
        <dbReference type="Rhea" id="RHEA-COMP:9562"/>
        <dbReference type="ChEBI" id="CHEBI:15378"/>
        <dbReference type="ChEBI" id="CHEBI:17757"/>
        <dbReference type="ChEBI" id="CHEBI:57540"/>
        <dbReference type="ChEBI" id="CHEBI:57945"/>
        <dbReference type="ChEBI" id="CHEBI:62192"/>
    </reaction>
</comment>
<comment type="catalytic activity">
    <reaction evidence="1">
        <text>a plastoquinone + NADPH + (n+1) H(+)(in) = a plastoquinol + NADP(+) + n H(+)(out)</text>
        <dbReference type="Rhea" id="RHEA:42612"/>
        <dbReference type="Rhea" id="RHEA-COMP:9561"/>
        <dbReference type="Rhea" id="RHEA-COMP:9562"/>
        <dbReference type="ChEBI" id="CHEBI:15378"/>
        <dbReference type="ChEBI" id="CHEBI:17757"/>
        <dbReference type="ChEBI" id="CHEBI:57783"/>
        <dbReference type="ChEBI" id="CHEBI:58349"/>
        <dbReference type="ChEBI" id="CHEBI:62192"/>
    </reaction>
</comment>
<comment type="subunit">
    <text evidence="1">NDH is composed of at least 16 different subunits, 5 of which are encoded in the nucleus.</text>
</comment>
<comment type="subcellular location">
    <subcellularLocation>
        <location evidence="1">Plastid</location>
        <location evidence="1">Chloroplast thylakoid membrane</location>
        <topology evidence="1">Peripheral membrane protein</topology>
        <orientation evidence="1">Stromal side</orientation>
    </subcellularLocation>
</comment>
<comment type="similarity">
    <text evidence="1">Belongs to the complex I 30 kDa subunit family.</text>
</comment>
<keyword id="KW-0150">Chloroplast</keyword>
<keyword id="KW-0472">Membrane</keyword>
<keyword id="KW-0520">NAD</keyword>
<keyword id="KW-0521">NADP</keyword>
<keyword id="KW-0934">Plastid</keyword>
<keyword id="KW-0618">Plastoquinone</keyword>
<keyword id="KW-0874">Quinone</keyword>
<keyword id="KW-1185">Reference proteome</keyword>
<keyword id="KW-0793">Thylakoid</keyword>
<keyword id="KW-1278">Translocase</keyword>
<keyword id="KW-0813">Transport</keyword>